<name>SRY_GLOMA</name>
<sequence length="201" mass="23096">MFRTVNGEDYSPAVQQRNILDFGKAHSLLWTDNGSANDRCETGGNCRESGQDRVKRPMNAFIVWSRDQRRKVALENPQMQNSEISKRLGYDWKMLTEAEKQPFFEEAQRLRAMHRDKYPGYKYRPRRKAKEATEIASRRLFSTVQPNAHRGDVVPLPIQGRLRQGHTFTNGKPVKPLTAHEHKQLTPATGASQQLDKPAPQ</sequence>
<comment type="function">
    <text evidence="1 2">Transcriptional regulator that controls a genetic switch in male development. It is necessary and sufficient for initiating male sex determination by directing the development of supporting cell precursors (pre-Sertoli cells) as Sertoli rather than granulosa cells. Involved in different aspects of gene regulation including promoter activation or repression. Binds to the DNA consensus sequence 5'-[AT]AACAA[AT]-3'. SRY HMG box recognizes DNA by partial intercalation in the minor groove and promotes DNA bending. Also involved in pre-mRNA splicing (By similarity). In male adult brain involved in the maintenance of motor functions of dopaminergic neurons (By similarity).</text>
</comment>
<comment type="subunit">
    <text evidence="2">Interacts with CALM, EP300, HDAC3, KPNB1, ZNF208 isoform KRAB-O, PARP1, SLC9A3R2 and WT1. The interaction with EP300 modulates its DNA-binding activity. The interaction with KPNB1 is sensitive to dissociation by Ran in the GTP-bound form. Interaction with PARP1 impaired its DNA-binding activity.</text>
</comment>
<comment type="subcellular location">
    <subcellularLocation>
        <location evidence="2">Nucleus speckle</location>
    </subcellularLocation>
    <subcellularLocation>
        <location evidence="2">Cytoplasm</location>
    </subcellularLocation>
    <subcellularLocation>
        <location evidence="2">Nucleus</location>
    </subcellularLocation>
</comment>
<comment type="PTM">
    <text evidence="2">Acetylation of Lys-130 contributes to its nuclear localization and enhances its interaction with KPNB1. Deacetylated by HDAC3.</text>
</comment>
<comment type="similarity">
    <text evidence="5">Belongs to the SRY family.</text>
</comment>
<comment type="online information" name="Protein Spotlight">
    <link uri="https://www.proteinspotlight.org/back_issues/080"/>
    <text>The tenuous nature of sex - Issue 80 of March 2007</text>
</comment>
<feature type="chain" id="PRO_0000048666" description="Sex-determining region Y protein">
    <location>
        <begin position="1"/>
        <end position="201"/>
    </location>
</feature>
<feature type="DNA-binding region" description="HMG box" evidence="3">
    <location>
        <begin position="54"/>
        <end position="122"/>
    </location>
</feature>
<feature type="region of interest" description="Disordered" evidence="4">
    <location>
        <begin position="162"/>
        <end position="201"/>
    </location>
</feature>
<feature type="compositionally biased region" description="Polar residues" evidence="4">
    <location>
        <begin position="186"/>
        <end position="195"/>
    </location>
</feature>
<dbReference type="EMBL" id="AB108527">
    <property type="protein sequence ID" value="BAC75659.2"/>
    <property type="molecule type" value="Genomic_DNA"/>
</dbReference>
<dbReference type="SMR" id="Q864P4"/>
<dbReference type="GO" id="GO:0005737">
    <property type="term" value="C:cytoplasm"/>
    <property type="evidence" value="ECO:0007669"/>
    <property type="project" value="UniProtKB-SubCell"/>
</dbReference>
<dbReference type="GO" id="GO:0016607">
    <property type="term" value="C:nuclear speck"/>
    <property type="evidence" value="ECO:0007669"/>
    <property type="project" value="UniProtKB-SubCell"/>
</dbReference>
<dbReference type="GO" id="GO:0005634">
    <property type="term" value="C:nucleus"/>
    <property type="evidence" value="ECO:0000250"/>
    <property type="project" value="UniProtKB"/>
</dbReference>
<dbReference type="GO" id="GO:0005516">
    <property type="term" value="F:calmodulin binding"/>
    <property type="evidence" value="ECO:0007669"/>
    <property type="project" value="UniProtKB-KW"/>
</dbReference>
<dbReference type="GO" id="GO:0001228">
    <property type="term" value="F:DNA-binding transcription activator activity, RNA polymerase II-specific"/>
    <property type="evidence" value="ECO:0007669"/>
    <property type="project" value="TreeGrafter"/>
</dbReference>
<dbReference type="GO" id="GO:0000978">
    <property type="term" value="F:RNA polymerase II cis-regulatory region sequence-specific DNA binding"/>
    <property type="evidence" value="ECO:0007669"/>
    <property type="project" value="TreeGrafter"/>
</dbReference>
<dbReference type="GO" id="GO:0030154">
    <property type="term" value="P:cell differentiation"/>
    <property type="evidence" value="ECO:0007669"/>
    <property type="project" value="UniProtKB-KW"/>
</dbReference>
<dbReference type="GO" id="GO:0030238">
    <property type="term" value="P:male sex determination"/>
    <property type="evidence" value="ECO:0007669"/>
    <property type="project" value="InterPro"/>
</dbReference>
<dbReference type="GO" id="GO:0007548">
    <property type="term" value="P:sex differentiation"/>
    <property type="evidence" value="ECO:0007669"/>
    <property type="project" value="UniProtKB-KW"/>
</dbReference>
<dbReference type="CDD" id="cd22034">
    <property type="entry name" value="HMG-box_SoxA_SRY"/>
    <property type="match status" value="1"/>
</dbReference>
<dbReference type="FunFam" id="1.10.30.10:FF:000002">
    <property type="entry name" value="transcription factor Sox-2"/>
    <property type="match status" value="1"/>
</dbReference>
<dbReference type="Gene3D" id="1.10.30.10">
    <property type="entry name" value="High mobility group box domain"/>
    <property type="match status" value="1"/>
</dbReference>
<dbReference type="InterPro" id="IPR009071">
    <property type="entry name" value="HMG_box_dom"/>
</dbReference>
<dbReference type="InterPro" id="IPR036910">
    <property type="entry name" value="HMG_box_dom_sf"/>
</dbReference>
<dbReference type="InterPro" id="IPR017253">
    <property type="entry name" value="SRY"/>
</dbReference>
<dbReference type="InterPro" id="IPR050140">
    <property type="entry name" value="SRY-related_HMG-box_TF-like"/>
</dbReference>
<dbReference type="PANTHER" id="PTHR10270:SF161">
    <property type="entry name" value="SEX-DETERMINING REGION Y PROTEIN"/>
    <property type="match status" value="1"/>
</dbReference>
<dbReference type="PANTHER" id="PTHR10270">
    <property type="entry name" value="SOX TRANSCRIPTION FACTOR"/>
    <property type="match status" value="1"/>
</dbReference>
<dbReference type="Pfam" id="PF00505">
    <property type="entry name" value="HMG_box"/>
    <property type="match status" value="1"/>
</dbReference>
<dbReference type="PIRSF" id="PIRSF037653">
    <property type="entry name" value="SRY"/>
    <property type="match status" value="1"/>
</dbReference>
<dbReference type="SMART" id="SM00398">
    <property type="entry name" value="HMG"/>
    <property type="match status" value="1"/>
</dbReference>
<dbReference type="SUPFAM" id="SSF47095">
    <property type="entry name" value="HMG-box"/>
    <property type="match status" value="1"/>
</dbReference>
<dbReference type="PROSITE" id="PS50118">
    <property type="entry name" value="HMG_BOX_2"/>
    <property type="match status" value="1"/>
</dbReference>
<gene>
    <name type="primary">SRY</name>
    <name type="synonym">TDF</name>
</gene>
<keyword id="KW-0007">Acetylation</keyword>
<keyword id="KW-0010">Activator</keyword>
<keyword id="KW-0112">Calmodulin-binding</keyword>
<keyword id="KW-0963">Cytoplasm</keyword>
<keyword id="KW-0221">Differentiation</keyword>
<keyword id="KW-0238">DNA-binding</keyword>
<keyword id="KW-0539">Nucleus</keyword>
<keyword id="KW-0678">Repressor</keyword>
<keyword id="KW-0726">Sexual differentiation</keyword>
<keyword id="KW-0804">Transcription</keyword>
<keyword id="KW-0805">Transcription regulation</keyword>
<protein>
    <recommendedName>
        <fullName>Sex-determining region Y protein</fullName>
    </recommendedName>
    <alternativeName>
        <fullName>Testis-determining factor</fullName>
    </alternativeName>
</protein>
<reference key="1">
    <citation type="journal article" date="2003" name="Mammal Study">
        <title>SRY gene structure and phylogeny in the cetacean species.</title>
        <authorList>
            <person name="Nishida S."/>
            <person name="Pastene L.A."/>
            <person name="Goto M."/>
            <person name="Koike H."/>
        </authorList>
    </citation>
    <scope>NUCLEOTIDE SEQUENCE [GENOMIC DNA]</scope>
</reference>
<reference key="2">
    <citation type="journal article" date="2007" name="Zool. Sci.">
        <title>Phylogenetic relationships among cetaceans revealed by Y-chromosome sequences.</title>
        <authorList>
            <person name="Nishida S."/>
            <person name="Goto M."/>
            <person name="Pastene L.A."/>
            <person name="Kanda N."/>
            <person name="Koike H."/>
        </authorList>
    </citation>
    <scope>SEQUENCE REVISION TO 129</scope>
</reference>
<accession>Q864P4</accession>
<evidence type="ECO:0000250" key="1">
    <source>
        <dbReference type="UniProtKB" id="P36394"/>
    </source>
</evidence>
<evidence type="ECO:0000250" key="2">
    <source>
        <dbReference type="UniProtKB" id="Q05066"/>
    </source>
</evidence>
<evidence type="ECO:0000255" key="3">
    <source>
        <dbReference type="PROSITE-ProRule" id="PRU00267"/>
    </source>
</evidence>
<evidence type="ECO:0000256" key="4">
    <source>
        <dbReference type="SAM" id="MobiDB-lite"/>
    </source>
</evidence>
<evidence type="ECO:0000305" key="5"/>
<proteinExistence type="inferred from homology"/>
<organism>
    <name type="scientific">Globicephala macrorhynchus</name>
    <name type="common">Short-finned pilot whale</name>
    <name type="synonym">Globicephala scammoni</name>
    <dbReference type="NCBI Taxonomy" id="38241"/>
    <lineage>
        <taxon>Eukaryota</taxon>
        <taxon>Metazoa</taxon>
        <taxon>Chordata</taxon>
        <taxon>Craniata</taxon>
        <taxon>Vertebrata</taxon>
        <taxon>Euteleostomi</taxon>
        <taxon>Mammalia</taxon>
        <taxon>Eutheria</taxon>
        <taxon>Laurasiatheria</taxon>
        <taxon>Artiodactyla</taxon>
        <taxon>Whippomorpha</taxon>
        <taxon>Cetacea</taxon>
        <taxon>Odontoceti</taxon>
        <taxon>Delphinidae</taxon>
        <taxon>Globicephala</taxon>
    </lineage>
</organism>